<proteinExistence type="inferred from homology"/>
<evidence type="ECO:0000255" key="1">
    <source>
        <dbReference type="HAMAP-Rule" id="MF_00651"/>
    </source>
</evidence>
<reference key="1">
    <citation type="journal article" date="2007" name="Proc. Natl. Acad. Sci. U.S.A.">
        <title>Genome and proteome of long-chain alkane degrading Geobacillus thermodenitrificans NG80-2 isolated from a deep-subsurface oil reservoir.</title>
        <authorList>
            <person name="Feng L."/>
            <person name="Wang W."/>
            <person name="Cheng J."/>
            <person name="Ren Y."/>
            <person name="Zhao G."/>
            <person name="Gao C."/>
            <person name="Tang Y."/>
            <person name="Liu X."/>
            <person name="Han W."/>
            <person name="Peng X."/>
            <person name="Liu R."/>
            <person name="Wang L."/>
        </authorList>
    </citation>
    <scope>NUCLEOTIDE SEQUENCE [LARGE SCALE GENOMIC DNA]</scope>
    <source>
        <strain>NG80-2</strain>
    </source>
</reference>
<keyword id="KW-0963">Cytoplasm</keyword>
<keyword id="KW-0378">Hydrolase</keyword>
<keyword id="KW-0540">Nuclease</keyword>
<keyword id="KW-0690">Ribosome biogenesis</keyword>
<feature type="chain" id="PRO_1000061520" description="Putative pre-16S rRNA nuclease">
    <location>
        <begin position="1"/>
        <end position="138"/>
    </location>
</feature>
<organism>
    <name type="scientific">Geobacillus thermodenitrificans (strain NG80-2)</name>
    <dbReference type="NCBI Taxonomy" id="420246"/>
    <lineage>
        <taxon>Bacteria</taxon>
        <taxon>Bacillati</taxon>
        <taxon>Bacillota</taxon>
        <taxon>Bacilli</taxon>
        <taxon>Bacillales</taxon>
        <taxon>Anoxybacillaceae</taxon>
        <taxon>Geobacillus</taxon>
    </lineage>
</organism>
<dbReference type="EC" id="3.1.-.-" evidence="1"/>
<dbReference type="EMBL" id="CP000557">
    <property type="protein sequence ID" value="ABO67832.1"/>
    <property type="molecule type" value="Genomic_DNA"/>
</dbReference>
<dbReference type="RefSeq" id="WP_008881013.1">
    <property type="nucleotide sequence ID" value="NC_009328.1"/>
</dbReference>
<dbReference type="SMR" id="A4IR78"/>
<dbReference type="GeneID" id="87623365"/>
<dbReference type="KEGG" id="gtn:GTNG_2487"/>
<dbReference type="eggNOG" id="COG0816">
    <property type="taxonomic scope" value="Bacteria"/>
</dbReference>
<dbReference type="HOGENOM" id="CLU_098240_2_0_9"/>
<dbReference type="Proteomes" id="UP000001578">
    <property type="component" value="Chromosome"/>
</dbReference>
<dbReference type="GO" id="GO:0005829">
    <property type="term" value="C:cytosol"/>
    <property type="evidence" value="ECO:0007669"/>
    <property type="project" value="TreeGrafter"/>
</dbReference>
<dbReference type="GO" id="GO:0004518">
    <property type="term" value="F:nuclease activity"/>
    <property type="evidence" value="ECO:0007669"/>
    <property type="project" value="UniProtKB-KW"/>
</dbReference>
<dbReference type="GO" id="GO:0000967">
    <property type="term" value="P:rRNA 5'-end processing"/>
    <property type="evidence" value="ECO:0007669"/>
    <property type="project" value="UniProtKB-UniRule"/>
</dbReference>
<dbReference type="CDD" id="cd16964">
    <property type="entry name" value="YqgF"/>
    <property type="match status" value="1"/>
</dbReference>
<dbReference type="FunFam" id="3.30.420.140:FF:000003">
    <property type="entry name" value="Putative pre-16S rRNA nuclease"/>
    <property type="match status" value="1"/>
</dbReference>
<dbReference type="Gene3D" id="3.30.420.140">
    <property type="entry name" value="YqgF/RNase H-like domain"/>
    <property type="match status" value="1"/>
</dbReference>
<dbReference type="HAMAP" id="MF_00651">
    <property type="entry name" value="Nuclease_YqgF"/>
    <property type="match status" value="1"/>
</dbReference>
<dbReference type="InterPro" id="IPR012337">
    <property type="entry name" value="RNaseH-like_sf"/>
</dbReference>
<dbReference type="InterPro" id="IPR005227">
    <property type="entry name" value="YqgF"/>
</dbReference>
<dbReference type="InterPro" id="IPR006641">
    <property type="entry name" value="YqgF/RNaseH-like_dom"/>
</dbReference>
<dbReference type="InterPro" id="IPR037027">
    <property type="entry name" value="YqgF/RNaseH-like_dom_sf"/>
</dbReference>
<dbReference type="NCBIfam" id="TIGR00250">
    <property type="entry name" value="RNAse_H_YqgF"/>
    <property type="match status" value="1"/>
</dbReference>
<dbReference type="PANTHER" id="PTHR33317">
    <property type="entry name" value="POLYNUCLEOTIDYL TRANSFERASE, RIBONUCLEASE H-LIKE SUPERFAMILY PROTEIN"/>
    <property type="match status" value="1"/>
</dbReference>
<dbReference type="PANTHER" id="PTHR33317:SF4">
    <property type="entry name" value="POLYNUCLEOTIDYL TRANSFERASE, RIBONUCLEASE H-LIKE SUPERFAMILY PROTEIN"/>
    <property type="match status" value="1"/>
</dbReference>
<dbReference type="Pfam" id="PF03652">
    <property type="entry name" value="RuvX"/>
    <property type="match status" value="1"/>
</dbReference>
<dbReference type="SMART" id="SM00732">
    <property type="entry name" value="YqgFc"/>
    <property type="match status" value="1"/>
</dbReference>
<dbReference type="SUPFAM" id="SSF53098">
    <property type="entry name" value="Ribonuclease H-like"/>
    <property type="match status" value="1"/>
</dbReference>
<gene>
    <name type="ordered locus">GTNG_2487</name>
</gene>
<name>YQGF_GEOTN</name>
<protein>
    <recommendedName>
        <fullName evidence="1">Putative pre-16S rRNA nuclease</fullName>
        <ecNumber evidence="1">3.1.-.-</ecNumber>
    </recommendedName>
</protein>
<accession>A4IR78</accession>
<sequence length="138" mass="15458">MRTLGLDLGTKTLGVAVSDEFGWTAQGLETIAIDEERGHYGFERLRAIIDEYGVDTIVVGWPKNMNGTLGPRAEASERFAAKLREEFSLPVVLWDERLSTMAAERMLIAADVSRKKRRKVIDKMAAAVILQSYLDSKR</sequence>
<comment type="function">
    <text evidence="1">Could be a nuclease involved in processing of the 5'-end of pre-16S rRNA.</text>
</comment>
<comment type="subcellular location">
    <subcellularLocation>
        <location evidence="1">Cytoplasm</location>
    </subcellularLocation>
</comment>
<comment type="similarity">
    <text evidence="1">Belongs to the YqgF nuclease family.</text>
</comment>